<gene>
    <name evidence="1" type="primary">thiM</name>
    <name type="ordered locus">GTNG_1360</name>
</gene>
<name>THIM_GEOTN</name>
<accession>A4IN26</accession>
<evidence type="ECO:0000255" key="1">
    <source>
        <dbReference type="HAMAP-Rule" id="MF_00228"/>
    </source>
</evidence>
<reference key="1">
    <citation type="journal article" date="2007" name="Proc. Natl. Acad. Sci. U.S.A.">
        <title>Genome and proteome of long-chain alkane degrading Geobacillus thermodenitrificans NG80-2 isolated from a deep-subsurface oil reservoir.</title>
        <authorList>
            <person name="Feng L."/>
            <person name="Wang W."/>
            <person name="Cheng J."/>
            <person name="Ren Y."/>
            <person name="Zhao G."/>
            <person name="Gao C."/>
            <person name="Tang Y."/>
            <person name="Liu X."/>
            <person name="Han W."/>
            <person name="Peng X."/>
            <person name="Liu R."/>
            <person name="Wang L."/>
        </authorList>
    </citation>
    <scope>NUCLEOTIDE SEQUENCE [LARGE SCALE GENOMIC DNA]</scope>
    <source>
        <strain>NG80-2</strain>
    </source>
</reference>
<protein>
    <recommendedName>
        <fullName evidence="1">Hydroxyethylthiazole kinase</fullName>
        <ecNumber evidence="1">2.7.1.50</ecNumber>
    </recommendedName>
    <alternativeName>
        <fullName evidence="1">4-methyl-5-beta-hydroxyethylthiazole kinase</fullName>
        <shortName evidence="1">TH kinase</shortName>
        <shortName evidence="1">Thz kinase</shortName>
    </alternativeName>
</protein>
<keyword id="KW-0067">ATP-binding</keyword>
<keyword id="KW-0418">Kinase</keyword>
<keyword id="KW-0460">Magnesium</keyword>
<keyword id="KW-0479">Metal-binding</keyword>
<keyword id="KW-0547">Nucleotide-binding</keyword>
<keyword id="KW-0784">Thiamine biosynthesis</keyword>
<keyword id="KW-0808">Transferase</keyword>
<feature type="chain" id="PRO_0000336557" description="Hydroxyethylthiazole kinase">
    <location>
        <begin position="1"/>
        <end position="269"/>
    </location>
</feature>
<feature type="binding site" evidence="1">
    <location>
        <position position="46"/>
    </location>
    <ligand>
        <name>substrate</name>
    </ligand>
</feature>
<feature type="binding site" evidence="1">
    <location>
        <position position="122"/>
    </location>
    <ligand>
        <name>ATP</name>
        <dbReference type="ChEBI" id="CHEBI:30616"/>
    </ligand>
</feature>
<feature type="binding site" evidence="1">
    <location>
        <position position="168"/>
    </location>
    <ligand>
        <name>ATP</name>
        <dbReference type="ChEBI" id="CHEBI:30616"/>
    </ligand>
</feature>
<feature type="binding site" evidence="1">
    <location>
        <position position="195"/>
    </location>
    <ligand>
        <name>substrate</name>
    </ligand>
</feature>
<comment type="function">
    <text evidence="1">Catalyzes the phosphorylation of the hydroxyl group of 4-methyl-5-beta-hydroxyethylthiazole (THZ).</text>
</comment>
<comment type="catalytic activity">
    <reaction evidence="1">
        <text>5-(2-hydroxyethyl)-4-methylthiazole + ATP = 4-methyl-5-(2-phosphooxyethyl)-thiazole + ADP + H(+)</text>
        <dbReference type="Rhea" id="RHEA:24212"/>
        <dbReference type="ChEBI" id="CHEBI:15378"/>
        <dbReference type="ChEBI" id="CHEBI:17957"/>
        <dbReference type="ChEBI" id="CHEBI:30616"/>
        <dbReference type="ChEBI" id="CHEBI:58296"/>
        <dbReference type="ChEBI" id="CHEBI:456216"/>
        <dbReference type="EC" id="2.7.1.50"/>
    </reaction>
</comment>
<comment type="cofactor">
    <cofactor evidence="1">
        <name>Mg(2+)</name>
        <dbReference type="ChEBI" id="CHEBI:18420"/>
    </cofactor>
</comment>
<comment type="pathway">
    <text evidence="1">Cofactor biosynthesis; thiamine diphosphate biosynthesis; 4-methyl-5-(2-phosphoethyl)-thiazole from 5-(2-hydroxyethyl)-4-methylthiazole: step 1/1.</text>
</comment>
<comment type="similarity">
    <text evidence="1">Belongs to the Thz kinase family.</text>
</comment>
<organism>
    <name type="scientific">Geobacillus thermodenitrificans (strain NG80-2)</name>
    <dbReference type="NCBI Taxonomy" id="420246"/>
    <lineage>
        <taxon>Bacteria</taxon>
        <taxon>Bacillati</taxon>
        <taxon>Bacillota</taxon>
        <taxon>Bacilli</taxon>
        <taxon>Bacillales</taxon>
        <taxon>Anoxybacillaceae</taxon>
        <taxon>Geobacillus</taxon>
    </lineage>
</organism>
<dbReference type="EC" id="2.7.1.50" evidence="1"/>
<dbReference type="EMBL" id="CP000557">
    <property type="protein sequence ID" value="ABO66730.1"/>
    <property type="molecule type" value="Genomic_DNA"/>
</dbReference>
<dbReference type="RefSeq" id="WP_008879355.1">
    <property type="nucleotide sequence ID" value="NC_009328.1"/>
</dbReference>
<dbReference type="SMR" id="A4IN26"/>
<dbReference type="KEGG" id="gtn:GTNG_1360"/>
<dbReference type="eggNOG" id="COG2145">
    <property type="taxonomic scope" value="Bacteria"/>
</dbReference>
<dbReference type="HOGENOM" id="CLU_019943_0_1_9"/>
<dbReference type="UniPathway" id="UPA00060">
    <property type="reaction ID" value="UER00139"/>
</dbReference>
<dbReference type="Proteomes" id="UP000001578">
    <property type="component" value="Chromosome"/>
</dbReference>
<dbReference type="GO" id="GO:0005524">
    <property type="term" value="F:ATP binding"/>
    <property type="evidence" value="ECO:0007669"/>
    <property type="project" value="UniProtKB-UniRule"/>
</dbReference>
<dbReference type="GO" id="GO:0004417">
    <property type="term" value="F:hydroxyethylthiazole kinase activity"/>
    <property type="evidence" value="ECO:0007669"/>
    <property type="project" value="UniProtKB-UniRule"/>
</dbReference>
<dbReference type="GO" id="GO:0000287">
    <property type="term" value="F:magnesium ion binding"/>
    <property type="evidence" value="ECO:0007669"/>
    <property type="project" value="UniProtKB-UniRule"/>
</dbReference>
<dbReference type="GO" id="GO:0009228">
    <property type="term" value="P:thiamine biosynthetic process"/>
    <property type="evidence" value="ECO:0007669"/>
    <property type="project" value="UniProtKB-KW"/>
</dbReference>
<dbReference type="GO" id="GO:0009229">
    <property type="term" value="P:thiamine diphosphate biosynthetic process"/>
    <property type="evidence" value="ECO:0007669"/>
    <property type="project" value="UniProtKB-UniRule"/>
</dbReference>
<dbReference type="CDD" id="cd01170">
    <property type="entry name" value="THZ_kinase"/>
    <property type="match status" value="1"/>
</dbReference>
<dbReference type="Gene3D" id="3.40.1190.20">
    <property type="match status" value="1"/>
</dbReference>
<dbReference type="HAMAP" id="MF_00228">
    <property type="entry name" value="Thz_kinase"/>
    <property type="match status" value="1"/>
</dbReference>
<dbReference type="InterPro" id="IPR000417">
    <property type="entry name" value="Hyethyz_kinase"/>
</dbReference>
<dbReference type="InterPro" id="IPR029056">
    <property type="entry name" value="Ribokinase-like"/>
</dbReference>
<dbReference type="NCBIfam" id="NF006830">
    <property type="entry name" value="PRK09355.1"/>
    <property type="match status" value="1"/>
</dbReference>
<dbReference type="NCBIfam" id="TIGR00694">
    <property type="entry name" value="thiM"/>
    <property type="match status" value="1"/>
</dbReference>
<dbReference type="Pfam" id="PF02110">
    <property type="entry name" value="HK"/>
    <property type="match status" value="1"/>
</dbReference>
<dbReference type="PIRSF" id="PIRSF000513">
    <property type="entry name" value="Thz_kinase"/>
    <property type="match status" value="1"/>
</dbReference>
<dbReference type="PRINTS" id="PR01099">
    <property type="entry name" value="HYETHTZKNASE"/>
</dbReference>
<dbReference type="SUPFAM" id="SSF53613">
    <property type="entry name" value="Ribokinase-like"/>
    <property type="match status" value="1"/>
</dbReference>
<proteinExistence type="inferred from homology"/>
<sequence length="269" mass="27781">MGNWHEWAELLERVRGTKPLVHNITNVVVTNFTANGLLALGASPVMAYAKEEVAEMAKLAGALVLNIGTLNATEVEAMLIAGRAANEAGVPVIFDPVGAGATSYRTETAHRIAEQIQLAVVRGNAAEIANMIGESWMIKGVDAGEGSGDVVALAKRAAAKLGTVVAITGKEDVVTDGQAAYLIHNGHPLLTKVTGAGCLLTSVVGAFAAVEQDAVKAAVAALTYYGVAAEQAAAEAGQRGPGSFQVAFLDALARIGVDDVKREGRVEQR</sequence>